<reference key="1">
    <citation type="journal article" date="1993" name="Mol. Biol. Evol.">
        <title>Relationships in the Drosophila obscura species group, inferred from mitochondrial cytochrome oxidase II sequences.</title>
        <authorList>
            <person name="Beckenbach A.T."/>
            <person name="Wei Y.W."/>
            <person name="Liu H."/>
        </authorList>
    </citation>
    <scope>NUCLEOTIDE SEQUENCE [GENOMIC DNA]</scope>
</reference>
<comment type="function">
    <text evidence="1">Component of the cytochrome c oxidase, the last enzyme in the mitochondrial electron transport chain which drives oxidative phosphorylation. The respiratory chain contains 3 multisubunit complexes succinate dehydrogenase (complex II, CII), ubiquinol-cytochrome c oxidoreductase (cytochrome b-c1 complex, complex III, CIII) and cytochrome c oxidase (complex IV, CIV), that cooperate to transfer electrons derived from NADH and succinate to molecular oxygen, creating an electrochemical gradient over the inner membrane that drives transmembrane transport and the ATP synthase. Cytochrome c oxidase is the component of the respiratory chain that catalyzes the reduction of oxygen to water. Electrons originating from reduced cytochrome c in the intermembrane space (IMS) are transferred via the dinuclear copper A center (CU(A)) of subunit 2 and heme A of subunit 1 to the active site in subunit 1, a binuclear center (BNC) formed by heme A3 and copper B (CU(B)). The BNC reduces molecular oxygen to 2 water molecules using 4 electrons from cytochrome c in the IMS and 4 protons from the mitochondrial matrix.</text>
</comment>
<comment type="catalytic activity">
    <reaction evidence="1">
        <text>4 Fe(II)-[cytochrome c] + O2 + 8 H(+)(in) = 4 Fe(III)-[cytochrome c] + 2 H2O + 4 H(+)(out)</text>
        <dbReference type="Rhea" id="RHEA:11436"/>
        <dbReference type="Rhea" id="RHEA-COMP:10350"/>
        <dbReference type="Rhea" id="RHEA-COMP:14399"/>
        <dbReference type="ChEBI" id="CHEBI:15377"/>
        <dbReference type="ChEBI" id="CHEBI:15378"/>
        <dbReference type="ChEBI" id="CHEBI:15379"/>
        <dbReference type="ChEBI" id="CHEBI:29033"/>
        <dbReference type="ChEBI" id="CHEBI:29034"/>
        <dbReference type="EC" id="7.1.1.9"/>
    </reaction>
    <physiologicalReaction direction="left-to-right" evidence="1">
        <dbReference type="Rhea" id="RHEA:11437"/>
    </physiologicalReaction>
</comment>
<comment type="cofactor">
    <cofactor evidence="1">
        <name>Cu cation</name>
        <dbReference type="ChEBI" id="CHEBI:23378"/>
    </cofactor>
    <text evidence="1">Binds a dinuclear copper A center per subunit.</text>
</comment>
<comment type="subunit">
    <text evidence="1">Component of the cytochrome c oxidase (complex IV, CIV), a multisubunit enzyme composed of a catalytic core of 3 subunits and several supernumerary subunits. The complex exists as a monomer or a dimer and forms supercomplexes (SCs) in the inner mitochondrial membrane with ubiquinol-cytochrome c oxidoreductase (cytochrome b-c1 complex, complex III, CIII).</text>
</comment>
<comment type="subcellular location">
    <subcellularLocation>
        <location evidence="1">Mitochondrion inner membrane</location>
        <topology evidence="1">Multi-pass membrane protein</topology>
    </subcellularLocation>
</comment>
<comment type="similarity">
    <text evidence="3">Belongs to the cytochrome c oxidase subunit 2 family.</text>
</comment>
<organism>
    <name type="scientific">Drosophila athabasca</name>
    <name type="common">Fruit fly</name>
    <dbReference type="NCBI Taxonomy" id="7248"/>
    <lineage>
        <taxon>Eukaryota</taxon>
        <taxon>Metazoa</taxon>
        <taxon>Ecdysozoa</taxon>
        <taxon>Arthropoda</taxon>
        <taxon>Hexapoda</taxon>
        <taxon>Insecta</taxon>
        <taxon>Pterygota</taxon>
        <taxon>Neoptera</taxon>
        <taxon>Endopterygota</taxon>
        <taxon>Diptera</taxon>
        <taxon>Brachycera</taxon>
        <taxon>Muscomorpha</taxon>
        <taxon>Ephydroidea</taxon>
        <taxon>Drosophilidae</taxon>
        <taxon>Drosophila</taxon>
        <taxon>Sophophora</taxon>
    </lineage>
</organism>
<accession>P84202</accession>
<accession>P29854</accession>
<accession>P29855</accession>
<accession>P29857</accession>
<accession>P29858</accession>
<sequence length="229" mass="26248">MSTWANLGLQDSASPLMEQLIFFHDHALLILVMITVLVGYLMFMLFFNSYVNRFLLHGQLIEMIWTILPAIILLFIAMPSLRLLYLLDEINEPSITLKSIGHQWYWSYEYSDFNNVEFDSYMIPTNELANDGFRLLDVDNRIVLPMNSQIRILVTAADVIHSWTVPALGVKVDGTPGRLNQTNFFINRPGLFYGQCSEICGANHSFMPIVIESVPVNYFIKWISNSVNS</sequence>
<protein>
    <recommendedName>
        <fullName>Cytochrome c oxidase subunit 2</fullName>
        <ecNumber>7.1.1.9</ecNumber>
    </recommendedName>
    <alternativeName>
        <fullName>Cytochrome c oxidase polypeptide II</fullName>
    </alternativeName>
</protein>
<dbReference type="EC" id="7.1.1.9"/>
<dbReference type="EMBL" id="M95141">
    <property type="protein sequence ID" value="AAA02771.2"/>
    <property type="molecule type" value="Genomic_DNA"/>
</dbReference>
<dbReference type="SMR" id="P84202"/>
<dbReference type="GO" id="GO:0005743">
    <property type="term" value="C:mitochondrial inner membrane"/>
    <property type="evidence" value="ECO:0007669"/>
    <property type="project" value="UniProtKB-SubCell"/>
</dbReference>
<dbReference type="GO" id="GO:0005507">
    <property type="term" value="F:copper ion binding"/>
    <property type="evidence" value="ECO:0007669"/>
    <property type="project" value="InterPro"/>
</dbReference>
<dbReference type="GO" id="GO:0004129">
    <property type="term" value="F:cytochrome-c oxidase activity"/>
    <property type="evidence" value="ECO:0007669"/>
    <property type="project" value="UniProtKB-EC"/>
</dbReference>
<dbReference type="GO" id="GO:0042773">
    <property type="term" value="P:ATP synthesis coupled electron transport"/>
    <property type="evidence" value="ECO:0007669"/>
    <property type="project" value="TreeGrafter"/>
</dbReference>
<dbReference type="CDD" id="cd13912">
    <property type="entry name" value="CcO_II_C"/>
    <property type="match status" value="1"/>
</dbReference>
<dbReference type="FunFam" id="1.10.287.90:FF:000006">
    <property type="entry name" value="Cytochrome c oxidase subunit 2"/>
    <property type="match status" value="1"/>
</dbReference>
<dbReference type="FunFam" id="2.60.40.420:FF:000001">
    <property type="entry name" value="Cytochrome c oxidase subunit 2"/>
    <property type="match status" value="1"/>
</dbReference>
<dbReference type="Gene3D" id="1.10.287.90">
    <property type="match status" value="1"/>
</dbReference>
<dbReference type="Gene3D" id="2.60.40.420">
    <property type="entry name" value="Cupredoxins - blue copper proteins"/>
    <property type="match status" value="1"/>
</dbReference>
<dbReference type="InterPro" id="IPR045187">
    <property type="entry name" value="CcO_II"/>
</dbReference>
<dbReference type="InterPro" id="IPR002429">
    <property type="entry name" value="CcO_II-like_C"/>
</dbReference>
<dbReference type="InterPro" id="IPR034210">
    <property type="entry name" value="CcO_II_C"/>
</dbReference>
<dbReference type="InterPro" id="IPR001505">
    <property type="entry name" value="Copper_CuA"/>
</dbReference>
<dbReference type="InterPro" id="IPR008972">
    <property type="entry name" value="Cupredoxin"/>
</dbReference>
<dbReference type="InterPro" id="IPR014222">
    <property type="entry name" value="Cyt_c_oxidase_su2"/>
</dbReference>
<dbReference type="InterPro" id="IPR011759">
    <property type="entry name" value="Cyt_c_oxidase_su2_TM_dom"/>
</dbReference>
<dbReference type="InterPro" id="IPR036257">
    <property type="entry name" value="Cyt_c_oxidase_su2_TM_sf"/>
</dbReference>
<dbReference type="NCBIfam" id="TIGR02866">
    <property type="entry name" value="CoxB"/>
    <property type="match status" value="1"/>
</dbReference>
<dbReference type="PANTHER" id="PTHR22888:SF9">
    <property type="entry name" value="CYTOCHROME C OXIDASE SUBUNIT 2"/>
    <property type="match status" value="1"/>
</dbReference>
<dbReference type="PANTHER" id="PTHR22888">
    <property type="entry name" value="CYTOCHROME C OXIDASE, SUBUNIT II"/>
    <property type="match status" value="1"/>
</dbReference>
<dbReference type="Pfam" id="PF00116">
    <property type="entry name" value="COX2"/>
    <property type="match status" value="1"/>
</dbReference>
<dbReference type="Pfam" id="PF02790">
    <property type="entry name" value="COX2_TM"/>
    <property type="match status" value="1"/>
</dbReference>
<dbReference type="PRINTS" id="PR01166">
    <property type="entry name" value="CYCOXIDASEII"/>
</dbReference>
<dbReference type="SUPFAM" id="SSF49503">
    <property type="entry name" value="Cupredoxins"/>
    <property type="match status" value="1"/>
</dbReference>
<dbReference type="SUPFAM" id="SSF81464">
    <property type="entry name" value="Cytochrome c oxidase subunit II-like, transmembrane region"/>
    <property type="match status" value="1"/>
</dbReference>
<dbReference type="PROSITE" id="PS00078">
    <property type="entry name" value="COX2"/>
    <property type="match status" value="1"/>
</dbReference>
<dbReference type="PROSITE" id="PS50857">
    <property type="entry name" value="COX2_CUA"/>
    <property type="match status" value="1"/>
</dbReference>
<dbReference type="PROSITE" id="PS50999">
    <property type="entry name" value="COX2_TM"/>
    <property type="match status" value="1"/>
</dbReference>
<feature type="chain" id="PRO_0000183575" description="Cytochrome c oxidase subunit 2">
    <location>
        <begin position="1"/>
        <end position="229"/>
    </location>
</feature>
<feature type="topological domain" description="Mitochondrial intermembrane" evidence="2">
    <location>
        <begin position="1"/>
        <end position="26"/>
    </location>
</feature>
<feature type="transmembrane region" description="Helical" evidence="2">
    <location>
        <begin position="27"/>
        <end position="48"/>
    </location>
</feature>
<feature type="topological domain" description="Mitochondrial matrix" evidence="2">
    <location>
        <begin position="49"/>
        <end position="62"/>
    </location>
</feature>
<feature type="transmembrane region" description="Helical" evidence="2">
    <location>
        <begin position="63"/>
        <end position="82"/>
    </location>
</feature>
<feature type="topological domain" description="Mitochondrial intermembrane" evidence="2">
    <location>
        <begin position="83"/>
        <end position="229"/>
    </location>
</feature>
<feature type="binding site" evidence="1">
    <location>
        <position position="161"/>
    </location>
    <ligand>
        <name>Cu cation</name>
        <dbReference type="ChEBI" id="CHEBI:23378"/>
        <label>A1</label>
    </ligand>
</feature>
<feature type="binding site" evidence="1">
    <location>
        <position position="196"/>
    </location>
    <ligand>
        <name>Cu cation</name>
        <dbReference type="ChEBI" id="CHEBI:23378"/>
        <label>A1</label>
    </ligand>
</feature>
<feature type="binding site" evidence="1">
    <location>
        <position position="196"/>
    </location>
    <ligand>
        <name>Cu cation</name>
        <dbReference type="ChEBI" id="CHEBI:23378"/>
        <label>A2</label>
    </ligand>
</feature>
<feature type="binding site" evidence="1">
    <location>
        <position position="198"/>
    </location>
    <ligand>
        <name>Cu cation</name>
        <dbReference type="ChEBI" id="CHEBI:23378"/>
        <label>A2</label>
    </ligand>
</feature>
<feature type="binding site" evidence="1">
    <location>
        <position position="198"/>
    </location>
    <ligand>
        <name>Mg(2+)</name>
        <dbReference type="ChEBI" id="CHEBI:18420"/>
        <note>ligand shared with subunit 1</note>
    </ligand>
</feature>
<feature type="binding site" evidence="1">
    <location>
        <position position="200"/>
    </location>
    <ligand>
        <name>Cu cation</name>
        <dbReference type="ChEBI" id="CHEBI:23378"/>
        <label>A1</label>
    </ligand>
</feature>
<feature type="binding site" evidence="1">
    <location>
        <position position="200"/>
    </location>
    <ligand>
        <name>Cu cation</name>
        <dbReference type="ChEBI" id="CHEBI:23378"/>
        <label>A2</label>
    </ligand>
</feature>
<feature type="binding site" evidence="1">
    <location>
        <position position="204"/>
    </location>
    <ligand>
        <name>Cu cation</name>
        <dbReference type="ChEBI" id="CHEBI:23378"/>
        <label>A2</label>
    </ligand>
</feature>
<feature type="binding site" evidence="1">
    <location>
        <position position="207"/>
    </location>
    <ligand>
        <name>Cu cation</name>
        <dbReference type="ChEBI" id="CHEBI:23378"/>
        <label>A1</label>
    </ligand>
</feature>
<proteinExistence type="inferred from homology"/>
<geneLocation type="mitochondrion"/>
<evidence type="ECO:0000250" key="1">
    <source>
        <dbReference type="UniProtKB" id="P00410"/>
    </source>
</evidence>
<evidence type="ECO:0000255" key="2"/>
<evidence type="ECO:0000305" key="3"/>
<keyword id="KW-0186">Copper</keyword>
<keyword id="KW-0249">Electron transport</keyword>
<keyword id="KW-0460">Magnesium</keyword>
<keyword id="KW-0472">Membrane</keyword>
<keyword id="KW-0479">Metal-binding</keyword>
<keyword id="KW-0496">Mitochondrion</keyword>
<keyword id="KW-0999">Mitochondrion inner membrane</keyword>
<keyword id="KW-0679">Respiratory chain</keyword>
<keyword id="KW-1278">Translocase</keyword>
<keyword id="KW-0812">Transmembrane</keyword>
<keyword id="KW-1133">Transmembrane helix</keyword>
<keyword id="KW-0813">Transport</keyword>
<name>COX2_DROAT</name>
<gene>
    <name type="primary">mt:CoII</name>
    <name type="synonym">CoII</name>
</gene>